<geneLocation type="mitochondrion"/>
<protein>
    <recommendedName>
        <fullName>NADH-ubiquinone oxidoreductase chain 2</fullName>
        <ecNumber>7.1.1.2</ecNumber>
    </recommendedName>
    <alternativeName>
        <fullName>NADH dehydrogenase subunit 2</fullName>
    </alternativeName>
</protein>
<dbReference type="EC" id="7.1.1.2"/>
<dbReference type="EMBL" id="AF059116">
    <property type="protein sequence ID" value="AAC14810.1"/>
    <property type="molecule type" value="Genomic_DNA"/>
</dbReference>
<dbReference type="RefSeq" id="YP_009050051.1">
    <property type="nucleotide sequence ID" value="NC_024631.1"/>
</dbReference>
<dbReference type="SMR" id="O63767"/>
<dbReference type="GeneID" id="20004248"/>
<dbReference type="CTD" id="4536"/>
<dbReference type="GO" id="GO:0005743">
    <property type="term" value="C:mitochondrial inner membrane"/>
    <property type="evidence" value="ECO:0007669"/>
    <property type="project" value="UniProtKB-SubCell"/>
</dbReference>
<dbReference type="GO" id="GO:0008137">
    <property type="term" value="F:NADH dehydrogenase (ubiquinone) activity"/>
    <property type="evidence" value="ECO:0007669"/>
    <property type="project" value="UniProtKB-EC"/>
</dbReference>
<dbReference type="GO" id="GO:0006120">
    <property type="term" value="P:mitochondrial electron transport, NADH to ubiquinone"/>
    <property type="evidence" value="ECO:0007669"/>
    <property type="project" value="InterPro"/>
</dbReference>
<dbReference type="InterPro" id="IPR050175">
    <property type="entry name" value="Complex_I_Subunit_2"/>
</dbReference>
<dbReference type="InterPro" id="IPR010933">
    <property type="entry name" value="NADH_DH_su2_C"/>
</dbReference>
<dbReference type="InterPro" id="IPR003917">
    <property type="entry name" value="NADH_UbQ_OxRdtase_chain2"/>
</dbReference>
<dbReference type="InterPro" id="IPR001750">
    <property type="entry name" value="ND/Mrp_TM"/>
</dbReference>
<dbReference type="PANTHER" id="PTHR46552">
    <property type="entry name" value="NADH-UBIQUINONE OXIDOREDUCTASE CHAIN 2"/>
    <property type="match status" value="1"/>
</dbReference>
<dbReference type="PANTHER" id="PTHR46552:SF1">
    <property type="entry name" value="NADH-UBIQUINONE OXIDOREDUCTASE CHAIN 2"/>
    <property type="match status" value="1"/>
</dbReference>
<dbReference type="Pfam" id="PF06444">
    <property type="entry name" value="NADH_dehy_S2_C"/>
    <property type="match status" value="1"/>
</dbReference>
<dbReference type="Pfam" id="PF00361">
    <property type="entry name" value="Proton_antipo_M"/>
    <property type="match status" value="1"/>
</dbReference>
<dbReference type="PRINTS" id="PR01436">
    <property type="entry name" value="NADHDHGNASE2"/>
</dbReference>
<accession>O63767</accession>
<feature type="chain" id="PRO_0000117541" description="NADH-ubiquinone oxidoreductase chain 2">
    <location>
        <begin position="1"/>
        <end position="346"/>
    </location>
</feature>
<feature type="transmembrane region" description="Helical" evidence="2">
    <location>
        <begin position="1"/>
        <end position="21"/>
    </location>
</feature>
<feature type="transmembrane region" description="Helical" evidence="2">
    <location>
        <begin position="25"/>
        <end position="45"/>
    </location>
</feature>
<feature type="transmembrane region" description="Helical" evidence="2">
    <location>
        <begin position="60"/>
        <end position="80"/>
    </location>
</feature>
<feature type="transmembrane region" description="Helical" evidence="2">
    <location>
        <begin position="95"/>
        <end position="115"/>
    </location>
</feature>
<feature type="transmembrane region" description="Helical" evidence="2">
    <location>
        <begin position="124"/>
        <end position="144"/>
    </location>
</feature>
<feature type="transmembrane region" description="Helical" evidence="2">
    <location>
        <begin position="149"/>
        <end position="169"/>
    </location>
</feature>
<feature type="transmembrane region" description="Helical" evidence="2">
    <location>
        <begin position="178"/>
        <end position="195"/>
    </location>
</feature>
<feature type="transmembrane region" description="Helical" evidence="2">
    <location>
        <begin position="200"/>
        <end position="219"/>
    </location>
</feature>
<feature type="transmembrane region" description="Helical" evidence="2">
    <location>
        <begin position="242"/>
        <end position="262"/>
    </location>
</feature>
<feature type="transmembrane region" description="Helical" evidence="2">
    <location>
        <begin position="274"/>
        <end position="294"/>
    </location>
</feature>
<feature type="transmembrane region" description="Helical" evidence="2">
    <location>
        <begin position="326"/>
        <end position="346"/>
    </location>
</feature>
<name>NU2M_ANAAC</name>
<sequence>MNPHATPVLVLSLALGTTITISSNHWVLAWTGLEINTLAIIPLISKSHHPRAVEAATKYFLTQAAASALVLFSSMTNAWATGQWDITQLNHPTSCLLLTAAIAIKLGLVPFHFWFPEVLQGSPLMTALLLSTLMKFPPLTLLLMTSKSLNPALLTAMALASAALGGWMGLNQTQTRKILAFSSISHLGWIAIILVYSPKLALLTFYLYTIMTSAVFMALNKIKALNLSMVLTSWTKTPVLNATLMLVLLSLAGLPPLTGFMPKWLIIQELTKQEMTPAAMAIAMLSLLSLFFYLRLAYHSTITLPPNSSNHMKQWYTSKPPSTPTAILASLSILLLPLSPMIHAIV</sequence>
<reference key="1">
    <citation type="journal article" date="1998" name="Mol. Phylogenet. Evol.">
        <title>Comparing molecular evolution in two mitochondrial protein coding genes (cytochrome b and ND2) in the dabbling ducks (Tribe: Anatini).</title>
        <authorList>
            <person name="Johnson K.P."/>
            <person name="Sorenson M.D."/>
        </authorList>
    </citation>
    <scope>NUCLEOTIDE SEQUENCE [GENOMIC DNA]</scope>
</reference>
<gene>
    <name type="primary">MT-ND2</name>
    <name type="synonym">MTND2</name>
    <name type="synonym">NADH2</name>
    <name type="synonym">ND2</name>
</gene>
<proteinExistence type="inferred from homology"/>
<comment type="function">
    <text evidence="1">Core subunit of the mitochondrial membrane respiratory chain NADH dehydrogenase (Complex I) that is believed to belong to the minimal assembly required for catalysis. Complex I functions in the transfer of electrons from NADH to the respiratory chain. The immediate electron acceptor for the enzyme is believed to be ubiquinone (By similarity).</text>
</comment>
<comment type="catalytic activity">
    <reaction>
        <text>a ubiquinone + NADH + 5 H(+)(in) = a ubiquinol + NAD(+) + 4 H(+)(out)</text>
        <dbReference type="Rhea" id="RHEA:29091"/>
        <dbReference type="Rhea" id="RHEA-COMP:9565"/>
        <dbReference type="Rhea" id="RHEA-COMP:9566"/>
        <dbReference type="ChEBI" id="CHEBI:15378"/>
        <dbReference type="ChEBI" id="CHEBI:16389"/>
        <dbReference type="ChEBI" id="CHEBI:17976"/>
        <dbReference type="ChEBI" id="CHEBI:57540"/>
        <dbReference type="ChEBI" id="CHEBI:57945"/>
        <dbReference type="EC" id="7.1.1.2"/>
    </reaction>
</comment>
<comment type="subcellular location">
    <subcellularLocation>
        <location>Mitochondrion inner membrane</location>
        <topology>Multi-pass membrane protein</topology>
    </subcellularLocation>
</comment>
<comment type="similarity">
    <text evidence="3">Belongs to the complex I subunit 2 family.</text>
</comment>
<organism>
    <name type="scientific">Anas acuta</name>
    <name type="common">Northern pintail</name>
    <dbReference type="NCBI Taxonomy" id="28680"/>
    <lineage>
        <taxon>Eukaryota</taxon>
        <taxon>Metazoa</taxon>
        <taxon>Chordata</taxon>
        <taxon>Craniata</taxon>
        <taxon>Vertebrata</taxon>
        <taxon>Euteleostomi</taxon>
        <taxon>Archelosauria</taxon>
        <taxon>Archosauria</taxon>
        <taxon>Dinosauria</taxon>
        <taxon>Saurischia</taxon>
        <taxon>Theropoda</taxon>
        <taxon>Coelurosauria</taxon>
        <taxon>Aves</taxon>
        <taxon>Neognathae</taxon>
        <taxon>Galloanserae</taxon>
        <taxon>Anseriformes</taxon>
        <taxon>Anatidae</taxon>
        <taxon>Anatinae</taxon>
        <taxon>Anas</taxon>
    </lineage>
</organism>
<evidence type="ECO:0000250" key="1"/>
<evidence type="ECO:0000255" key="2"/>
<evidence type="ECO:0000305" key="3"/>
<keyword id="KW-0249">Electron transport</keyword>
<keyword id="KW-0472">Membrane</keyword>
<keyword id="KW-0496">Mitochondrion</keyword>
<keyword id="KW-0999">Mitochondrion inner membrane</keyword>
<keyword id="KW-0520">NAD</keyword>
<keyword id="KW-0679">Respiratory chain</keyword>
<keyword id="KW-1278">Translocase</keyword>
<keyword id="KW-0812">Transmembrane</keyword>
<keyword id="KW-1133">Transmembrane helix</keyword>
<keyword id="KW-0813">Transport</keyword>
<keyword id="KW-0830">Ubiquinone</keyword>